<dbReference type="EC" id="7.6.2.5" evidence="1"/>
<dbReference type="EMBL" id="M60874">
    <property type="protein sequence ID" value="AAA26192.1"/>
    <property type="molecule type" value="Genomic_DNA"/>
</dbReference>
<dbReference type="EMBL" id="BA000040">
    <property type="protein sequence ID" value="BAC45732.1"/>
    <property type="molecule type" value="Genomic_DNA"/>
</dbReference>
<dbReference type="PIR" id="A39741">
    <property type="entry name" value="A39741"/>
</dbReference>
<dbReference type="RefSeq" id="NP_767107.1">
    <property type="nucleotide sequence ID" value="NC_004463.1"/>
</dbReference>
<dbReference type="RefSeq" id="WP_011083298.1">
    <property type="nucleotide sequence ID" value="NC_004463.1"/>
</dbReference>
<dbReference type="SMR" id="P30963"/>
<dbReference type="FunCoup" id="P30963">
    <property type="interactions" value="287"/>
</dbReference>
<dbReference type="STRING" id="224911.AAV28_41585"/>
<dbReference type="TCDB" id="3.A.1.107.1">
    <property type="family name" value="the atp-binding cassette (abc) superfamily"/>
</dbReference>
<dbReference type="EnsemblBacteria" id="BAC45732">
    <property type="protein sequence ID" value="BAC45732"/>
    <property type="gene ID" value="BAC45732"/>
</dbReference>
<dbReference type="GeneID" id="46495613"/>
<dbReference type="KEGG" id="bja:blr0467"/>
<dbReference type="PATRIC" id="fig|224911.44.peg.9000"/>
<dbReference type="eggNOG" id="COG4133">
    <property type="taxonomic scope" value="Bacteria"/>
</dbReference>
<dbReference type="HOGENOM" id="CLU_000604_1_2_5"/>
<dbReference type="InParanoid" id="P30963"/>
<dbReference type="OrthoDB" id="9800654at2"/>
<dbReference type="PhylomeDB" id="P30963"/>
<dbReference type="Proteomes" id="UP000002526">
    <property type="component" value="Chromosome"/>
</dbReference>
<dbReference type="GO" id="GO:0005886">
    <property type="term" value="C:plasma membrane"/>
    <property type="evidence" value="ECO:0007669"/>
    <property type="project" value="UniProtKB-SubCell"/>
</dbReference>
<dbReference type="GO" id="GO:0015439">
    <property type="term" value="F:ABC-type heme transporter activity"/>
    <property type="evidence" value="ECO:0007669"/>
    <property type="project" value="UniProtKB-EC"/>
</dbReference>
<dbReference type="GO" id="GO:0005524">
    <property type="term" value="F:ATP binding"/>
    <property type="evidence" value="ECO:0007669"/>
    <property type="project" value="UniProtKB-KW"/>
</dbReference>
<dbReference type="GO" id="GO:0016887">
    <property type="term" value="F:ATP hydrolysis activity"/>
    <property type="evidence" value="ECO:0007669"/>
    <property type="project" value="InterPro"/>
</dbReference>
<dbReference type="GO" id="GO:0017004">
    <property type="term" value="P:cytochrome complex assembly"/>
    <property type="evidence" value="ECO:0007669"/>
    <property type="project" value="UniProtKB-KW"/>
</dbReference>
<dbReference type="Gene3D" id="3.40.50.300">
    <property type="entry name" value="P-loop containing nucleotide triphosphate hydrolases"/>
    <property type="match status" value="1"/>
</dbReference>
<dbReference type="InterPro" id="IPR003593">
    <property type="entry name" value="AAA+_ATPase"/>
</dbReference>
<dbReference type="InterPro" id="IPR003439">
    <property type="entry name" value="ABC_transporter-like_ATP-bd"/>
</dbReference>
<dbReference type="InterPro" id="IPR017871">
    <property type="entry name" value="ABC_transporter-like_CS"/>
</dbReference>
<dbReference type="InterPro" id="IPR005895">
    <property type="entry name" value="ABC_transptr_haem_export_CcmA"/>
</dbReference>
<dbReference type="InterPro" id="IPR027417">
    <property type="entry name" value="P-loop_NTPase"/>
</dbReference>
<dbReference type="NCBIfam" id="TIGR01189">
    <property type="entry name" value="ccmA"/>
    <property type="match status" value="1"/>
</dbReference>
<dbReference type="PANTHER" id="PTHR43499">
    <property type="entry name" value="ABC TRANSPORTER I FAMILY MEMBER 1"/>
    <property type="match status" value="1"/>
</dbReference>
<dbReference type="PANTHER" id="PTHR43499:SF1">
    <property type="entry name" value="ABC TRANSPORTER I FAMILY MEMBER 1"/>
    <property type="match status" value="1"/>
</dbReference>
<dbReference type="Pfam" id="PF00005">
    <property type="entry name" value="ABC_tran"/>
    <property type="match status" value="1"/>
</dbReference>
<dbReference type="SMART" id="SM00382">
    <property type="entry name" value="AAA"/>
    <property type="match status" value="1"/>
</dbReference>
<dbReference type="SUPFAM" id="SSF52540">
    <property type="entry name" value="P-loop containing nucleoside triphosphate hydrolases"/>
    <property type="match status" value="1"/>
</dbReference>
<dbReference type="PROSITE" id="PS00211">
    <property type="entry name" value="ABC_TRANSPORTER_1"/>
    <property type="match status" value="1"/>
</dbReference>
<dbReference type="PROSITE" id="PS50893">
    <property type="entry name" value="ABC_TRANSPORTER_2"/>
    <property type="match status" value="1"/>
</dbReference>
<dbReference type="PROSITE" id="PS51243">
    <property type="entry name" value="CCMA"/>
    <property type="match status" value="1"/>
</dbReference>
<comment type="function">
    <text evidence="1">Part of the ABC transporter complex CcmAB involved in the biogenesis of c-type cytochromes; once thought to export heme, this seems not to be the case, but its exact role is uncertain. Responsible for energy coupling to the transport system.</text>
</comment>
<comment type="catalytic activity">
    <reaction evidence="1">
        <text>heme b(in) + ATP + H2O = heme b(out) + ADP + phosphate + H(+)</text>
        <dbReference type="Rhea" id="RHEA:19261"/>
        <dbReference type="ChEBI" id="CHEBI:15377"/>
        <dbReference type="ChEBI" id="CHEBI:15378"/>
        <dbReference type="ChEBI" id="CHEBI:30616"/>
        <dbReference type="ChEBI" id="CHEBI:43474"/>
        <dbReference type="ChEBI" id="CHEBI:60344"/>
        <dbReference type="ChEBI" id="CHEBI:456216"/>
        <dbReference type="EC" id="7.6.2.5"/>
    </reaction>
</comment>
<comment type="subunit">
    <text evidence="1">The complex is composed of two ATP-binding proteins (CcmA) and two transmembrane proteins (CcmB).</text>
</comment>
<comment type="subcellular location">
    <subcellularLocation>
        <location evidence="1">Cell inner membrane</location>
        <topology evidence="1">Peripheral membrane protein</topology>
    </subcellularLocation>
</comment>
<comment type="similarity">
    <text evidence="1">Belongs to the ABC transporter superfamily. CcmA exporter (TC 3.A.1.107) family.</text>
</comment>
<keyword id="KW-0067">ATP-binding</keyword>
<keyword id="KW-0997">Cell inner membrane</keyword>
<keyword id="KW-1003">Cell membrane</keyword>
<keyword id="KW-0201">Cytochrome c-type biogenesis</keyword>
<keyword id="KW-0472">Membrane</keyword>
<keyword id="KW-0547">Nucleotide-binding</keyword>
<keyword id="KW-1185">Reference proteome</keyword>
<keyword id="KW-1278">Translocase</keyword>
<keyword id="KW-0813">Transport</keyword>
<reference key="1">
    <citation type="journal article" date="1991" name="J. Biol. Chem.">
        <title>Discovery and sequence analysis of bacterial genes involved in the biogenesis of c-type cytochromes.</title>
        <authorList>
            <person name="Ramseier T.M."/>
            <person name="Winteler H.V."/>
            <person name="Hennecke H."/>
        </authorList>
    </citation>
    <scope>NUCLEOTIDE SEQUENCE [GENOMIC DNA]</scope>
    <source>
        <strain>USDA 110RIF15</strain>
    </source>
</reference>
<reference key="2">
    <citation type="journal article" date="2002" name="DNA Res.">
        <title>Complete genomic sequence of nitrogen-fixing symbiotic bacterium Bradyrhizobium japonicum USDA110.</title>
        <authorList>
            <person name="Kaneko T."/>
            <person name="Nakamura Y."/>
            <person name="Sato S."/>
            <person name="Minamisawa K."/>
            <person name="Uchiumi T."/>
            <person name="Sasamoto S."/>
            <person name="Watanabe A."/>
            <person name="Idesawa K."/>
            <person name="Iriguchi M."/>
            <person name="Kawashima K."/>
            <person name="Kohara M."/>
            <person name="Matsumoto M."/>
            <person name="Shimpo S."/>
            <person name="Tsuruoka H."/>
            <person name="Wada T."/>
            <person name="Yamada M."/>
            <person name="Tabata S."/>
        </authorList>
    </citation>
    <scope>NUCLEOTIDE SEQUENCE [LARGE SCALE GENOMIC DNA]</scope>
    <source>
        <strain>JCM 10833 / BCRC 13528 / IAM 13628 / NBRC 14792 / USDA 110</strain>
    </source>
</reference>
<protein>
    <recommendedName>
        <fullName evidence="1">Cytochrome c biogenesis ATP-binding export protein CcmA</fullName>
        <ecNumber evidence="1">7.6.2.5</ecNumber>
    </recommendedName>
    <alternativeName>
        <fullName evidence="1">Heme exporter protein A</fullName>
    </alternativeName>
</protein>
<proteinExistence type="inferred from homology"/>
<sequence length="200" mass="21132">MQLSGRRVICVRGGREVFAGLDFEAVSGEAVAVVGRNGSGKTSLLRLIAGLLIPAGGTIALDGGDAELTLPEQCHYLGHRDALKPALSVAENLSFWADFLGGERLDAHESLATVGLDHATHLPAAFLSAGQRRRLSLARLLTVRRPIWLLDEPTTALDVAGQDMFGGLMRDHLARGGLIIAATHMALGIDSRELRIGGVA</sequence>
<evidence type="ECO:0000255" key="1">
    <source>
        <dbReference type="HAMAP-Rule" id="MF_01707"/>
    </source>
</evidence>
<name>CCMA_BRADU</name>
<gene>
    <name evidence="1" type="primary">ccmA</name>
    <name type="synonym">cycV</name>
    <name type="ordered locus">blr0467</name>
</gene>
<feature type="chain" id="PRO_0000092173" description="Cytochrome c biogenesis ATP-binding export protein CcmA">
    <location>
        <begin position="1"/>
        <end position="200"/>
    </location>
</feature>
<feature type="domain" description="ABC transporter" evidence="1">
    <location>
        <begin position="3"/>
        <end position="199"/>
    </location>
</feature>
<feature type="binding site" evidence="1">
    <location>
        <begin position="35"/>
        <end position="42"/>
    </location>
    <ligand>
        <name>ATP</name>
        <dbReference type="ChEBI" id="CHEBI:30616"/>
    </ligand>
</feature>
<accession>P30963</accession>
<organism>
    <name type="scientific">Bradyrhizobium diazoefficiens (strain JCM 10833 / BCRC 13528 / IAM 13628 / NBRC 14792 / USDA 110)</name>
    <dbReference type="NCBI Taxonomy" id="224911"/>
    <lineage>
        <taxon>Bacteria</taxon>
        <taxon>Pseudomonadati</taxon>
        <taxon>Pseudomonadota</taxon>
        <taxon>Alphaproteobacteria</taxon>
        <taxon>Hyphomicrobiales</taxon>
        <taxon>Nitrobacteraceae</taxon>
        <taxon>Bradyrhizobium</taxon>
    </lineage>
</organism>